<sequence>MMQPKKTKFRKAHKGRIHGVASSGATLAFGQFGLKAMEPDRVTARQIEAARRALTRHMKRAGRVWIRVFPDLPVSKKPAEVRMGSGKGSPELWVARVKPGRVMFEIDGVSNQIAREALTLAAAKLPIKTRFVERIAE</sequence>
<reference key="1">
    <citation type="journal article" date="2007" name="Science">
        <title>Legumes symbioses: absence of nod genes in photosynthetic bradyrhizobia.</title>
        <authorList>
            <person name="Giraud E."/>
            <person name="Moulin L."/>
            <person name="Vallenet D."/>
            <person name="Barbe V."/>
            <person name="Cytryn E."/>
            <person name="Avarre J.-C."/>
            <person name="Jaubert M."/>
            <person name="Simon D."/>
            <person name="Cartieaux F."/>
            <person name="Prin Y."/>
            <person name="Bena G."/>
            <person name="Hannibal L."/>
            <person name="Fardoux J."/>
            <person name="Kojadinovic M."/>
            <person name="Vuillet L."/>
            <person name="Lajus A."/>
            <person name="Cruveiller S."/>
            <person name="Rouy Z."/>
            <person name="Mangenot S."/>
            <person name="Segurens B."/>
            <person name="Dossat C."/>
            <person name="Franck W.L."/>
            <person name="Chang W.-S."/>
            <person name="Saunders E."/>
            <person name="Bruce D."/>
            <person name="Richardson P."/>
            <person name="Normand P."/>
            <person name="Dreyfus B."/>
            <person name="Pignol D."/>
            <person name="Stacey G."/>
            <person name="Emerich D."/>
            <person name="Vermeglio A."/>
            <person name="Medigue C."/>
            <person name="Sadowsky M."/>
        </authorList>
    </citation>
    <scope>NUCLEOTIDE SEQUENCE [LARGE SCALE GENOMIC DNA]</scope>
    <source>
        <strain>ORS 278</strain>
    </source>
</reference>
<protein>
    <recommendedName>
        <fullName evidence="1">Large ribosomal subunit protein uL16</fullName>
    </recommendedName>
    <alternativeName>
        <fullName evidence="2">50S ribosomal protein L16</fullName>
    </alternativeName>
</protein>
<organism>
    <name type="scientific">Bradyrhizobium sp. (strain ORS 278)</name>
    <dbReference type="NCBI Taxonomy" id="114615"/>
    <lineage>
        <taxon>Bacteria</taxon>
        <taxon>Pseudomonadati</taxon>
        <taxon>Pseudomonadota</taxon>
        <taxon>Alphaproteobacteria</taxon>
        <taxon>Hyphomicrobiales</taxon>
        <taxon>Nitrobacteraceae</taxon>
        <taxon>Bradyrhizobium</taxon>
    </lineage>
</organism>
<comment type="function">
    <text evidence="1">Binds 23S rRNA and is also seen to make contacts with the A and possibly P site tRNAs.</text>
</comment>
<comment type="subunit">
    <text evidence="1">Part of the 50S ribosomal subunit.</text>
</comment>
<comment type="similarity">
    <text evidence="1">Belongs to the universal ribosomal protein uL16 family.</text>
</comment>
<accession>A4YSJ9</accession>
<dbReference type="EMBL" id="CU234118">
    <property type="protein sequence ID" value="CAL76875.1"/>
    <property type="molecule type" value="Genomic_DNA"/>
</dbReference>
<dbReference type="RefSeq" id="WP_006611845.1">
    <property type="nucleotide sequence ID" value="NC_009445.1"/>
</dbReference>
<dbReference type="SMR" id="A4YSJ9"/>
<dbReference type="STRING" id="114615.BRADO3073"/>
<dbReference type="KEGG" id="bra:BRADO3073"/>
<dbReference type="eggNOG" id="COG0197">
    <property type="taxonomic scope" value="Bacteria"/>
</dbReference>
<dbReference type="HOGENOM" id="CLU_078858_2_1_5"/>
<dbReference type="OrthoDB" id="9802589at2"/>
<dbReference type="Proteomes" id="UP000001994">
    <property type="component" value="Chromosome"/>
</dbReference>
<dbReference type="GO" id="GO:0022625">
    <property type="term" value="C:cytosolic large ribosomal subunit"/>
    <property type="evidence" value="ECO:0007669"/>
    <property type="project" value="TreeGrafter"/>
</dbReference>
<dbReference type="GO" id="GO:0019843">
    <property type="term" value="F:rRNA binding"/>
    <property type="evidence" value="ECO:0007669"/>
    <property type="project" value="UniProtKB-UniRule"/>
</dbReference>
<dbReference type="GO" id="GO:0003735">
    <property type="term" value="F:structural constituent of ribosome"/>
    <property type="evidence" value="ECO:0007669"/>
    <property type="project" value="InterPro"/>
</dbReference>
<dbReference type="GO" id="GO:0000049">
    <property type="term" value="F:tRNA binding"/>
    <property type="evidence" value="ECO:0007669"/>
    <property type="project" value="UniProtKB-KW"/>
</dbReference>
<dbReference type="GO" id="GO:0006412">
    <property type="term" value="P:translation"/>
    <property type="evidence" value="ECO:0007669"/>
    <property type="project" value="UniProtKB-UniRule"/>
</dbReference>
<dbReference type="CDD" id="cd01433">
    <property type="entry name" value="Ribosomal_L16_L10e"/>
    <property type="match status" value="1"/>
</dbReference>
<dbReference type="FunFam" id="3.90.1170.10:FF:000001">
    <property type="entry name" value="50S ribosomal protein L16"/>
    <property type="match status" value="1"/>
</dbReference>
<dbReference type="Gene3D" id="3.90.1170.10">
    <property type="entry name" value="Ribosomal protein L10e/L16"/>
    <property type="match status" value="1"/>
</dbReference>
<dbReference type="HAMAP" id="MF_01342">
    <property type="entry name" value="Ribosomal_uL16"/>
    <property type="match status" value="1"/>
</dbReference>
<dbReference type="InterPro" id="IPR047873">
    <property type="entry name" value="Ribosomal_uL16"/>
</dbReference>
<dbReference type="InterPro" id="IPR000114">
    <property type="entry name" value="Ribosomal_uL16_bact-type"/>
</dbReference>
<dbReference type="InterPro" id="IPR020798">
    <property type="entry name" value="Ribosomal_uL16_CS"/>
</dbReference>
<dbReference type="InterPro" id="IPR016180">
    <property type="entry name" value="Ribosomal_uL16_dom"/>
</dbReference>
<dbReference type="InterPro" id="IPR036920">
    <property type="entry name" value="Ribosomal_uL16_sf"/>
</dbReference>
<dbReference type="NCBIfam" id="TIGR01164">
    <property type="entry name" value="rplP_bact"/>
    <property type="match status" value="1"/>
</dbReference>
<dbReference type="PANTHER" id="PTHR12220">
    <property type="entry name" value="50S/60S RIBOSOMAL PROTEIN L16"/>
    <property type="match status" value="1"/>
</dbReference>
<dbReference type="PANTHER" id="PTHR12220:SF13">
    <property type="entry name" value="LARGE RIBOSOMAL SUBUNIT PROTEIN UL16M"/>
    <property type="match status" value="1"/>
</dbReference>
<dbReference type="Pfam" id="PF00252">
    <property type="entry name" value="Ribosomal_L16"/>
    <property type="match status" value="1"/>
</dbReference>
<dbReference type="PRINTS" id="PR00060">
    <property type="entry name" value="RIBOSOMALL16"/>
</dbReference>
<dbReference type="SUPFAM" id="SSF54686">
    <property type="entry name" value="Ribosomal protein L16p/L10e"/>
    <property type="match status" value="1"/>
</dbReference>
<dbReference type="PROSITE" id="PS00586">
    <property type="entry name" value="RIBOSOMAL_L16_1"/>
    <property type="match status" value="1"/>
</dbReference>
<dbReference type="PROSITE" id="PS00701">
    <property type="entry name" value="RIBOSOMAL_L16_2"/>
    <property type="match status" value="1"/>
</dbReference>
<gene>
    <name evidence="1" type="primary">rplP</name>
    <name type="ordered locus">BRADO3073</name>
</gene>
<evidence type="ECO:0000255" key="1">
    <source>
        <dbReference type="HAMAP-Rule" id="MF_01342"/>
    </source>
</evidence>
<evidence type="ECO:0000305" key="2"/>
<proteinExistence type="inferred from homology"/>
<name>RL16_BRASO</name>
<feature type="chain" id="PRO_1000054584" description="Large ribosomal subunit protein uL16">
    <location>
        <begin position="1"/>
        <end position="137"/>
    </location>
</feature>
<keyword id="KW-1185">Reference proteome</keyword>
<keyword id="KW-0687">Ribonucleoprotein</keyword>
<keyword id="KW-0689">Ribosomal protein</keyword>
<keyword id="KW-0694">RNA-binding</keyword>
<keyword id="KW-0699">rRNA-binding</keyword>
<keyword id="KW-0820">tRNA-binding</keyword>